<sequence>MEMASHPAVHPVALPPPYQAVGPPAPPAVRINDFPGSPGTLMGLALRFAQLGFALTALCIMVSIVGFSSVTAFCFLVAAMVLQCIWSLCLGVLDCYALLTKRSLRNSLILSFFVVGDWITSTMTFAGACAAAGITVLIDNDLNQCGPNHCNRFEAAAAMAFMSWVITTISFFLSFWILVTCR</sequence>
<dbReference type="EMBL" id="DS544904">
    <property type="protein sequence ID" value="EDQ80312.1"/>
    <property type="status" value="ALT_INIT"/>
    <property type="molecule type" value="Genomic_DNA"/>
</dbReference>
<dbReference type="EMBL" id="DC944244">
    <property type="status" value="NOT_ANNOTATED_CDS"/>
    <property type="molecule type" value="mRNA"/>
</dbReference>
<dbReference type="RefSeq" id="XP_001754858.1">
    <property type="nucleotide sequence ID" value="XM_001754806.1"/>
</dbReference>
<dbReference type="FunCoup" id="A9RLK6">
    <property type="interactions" value="1787"/>
</dbReference>
<dbReference type="PaxDb" id="3218-PP1S15_474V6.1"/>
<dbReference type="EnsemblPlants" id="Pp3c16_4800V3.1">
    <property type="protein sequence ID" value="Pp3c16_4800V3.1"/>
    <property type="gene ID" value="Pp3c16_4800"/>
</dbReference>
<dbReference type="EnsemblPlants" id="Pp3c16_4800V3.2">
    <property type="protein sequence ID" value="Pp3c16_4800V3.2"/>
    <property type="gene ID" value="Pp3c16_4800"/>
</dbReference>
<dbReference type="Gramene" id="Pp3c16_4800V3.1">
    <property type="protein sequence ID" value="Pp3c16_4800V3.1"/>
    <property type="gene ID" value="Pp3c16_4800"/>
</dbReference>
<dbReference type="Gramene" id="Pp3c16_4800V3.2">
    <property type="protein sequence ID" value="Pp3c16_4800V3.2"/>
    <property type="gene ID" value="Pp3c16_4800"/>
</dbReference>
<dbReference type="eggNOG" id="ENOG502QTTS">
    <property type="taxonomic scope" value="Eukaryota"/>
</dbReference>
<dbReference type="HOGENOM" id="CLU_103961_1_0_1"/>
<dbReference type="InParanoid" id="A9RLK6"/>
<dbReference type="OMA" id="MEMASHP"/>
<dbReference type="OrthoDB" id="828022at2759"/>
<dbReference type="Proteomes" id="UP000006727">
    <property type="component" value="Chromosome 16"/>
</dbReference>
<dbReference type="GO" id="GO:0016020">
    <property type="term" value="C:membrane"/>
    <property type="evidence" value="ECO:0000318"/>
    <property type="project" value="GO_Central"/>
</dbReference>
<dbReference type="GO" id="GO:0005886">
    <property type="term" value="C:plasma membrane"/>
    <property type="evidence" value="ECO:0007669"/>
    <property type="project" value="UniProtKB-SubCell"/>
</dbReference>
<dbReference type="InterPro" id="IPR006702">
    <property type="entry name" value="CASP_dom"/>
</dbReference>
<dbReference type="InterPro" id="IPR045009">
    <property type="entry name" value="CASPL-5"/>
</dbReference>
<dbReference type="PANTHER" id="PTHR32021:SF1">
    <property type="entry name" value="CASP-LIKE PROTEIN 5A1"/>
    <property type="match status" value="1"/>
</dbReference>
<dbReference type="PANTHER" id="PTHR32021">
    <property type="entry name" value="CASP-LIKE PROTEIN 5B3"/>
    <property type="match status" value="1"/>
</dbReference>
<dbReference type="Pfam" id="PF04535">
    <property type="entry name" value="CASP_dom"/>
    <property type="match status" value="1"/>
</dbReference>
<protein>
    <recommendedName>
        <fullName>CASP-like protein 5A1</fullName>
        <shortName>PpCASPL5A1</shortName>
    </recommendedName>
</protein>
<comment type="subunit">
    <text evidence="1">Homodimer and heterodimers.</text>
</comment>
<comment type="subcellular location">
    <subcellularLocation>
        <location evidence="1">Cell membrane</location>
        <topology evidence="1">Multi-pass membrane protein</topology>
    </subcellularLocation>
</comment>
<comment type="similarity">
    <text evidence="3">Belongs to the Casparian strip membrane proteins (CASP) family.</text>
</comment>
<comment type="sequence caution" evidence="3">
    <conflict type="erroneous initiation">
        <sequence resource="EMBL-CDS" id="EDQ80312"/>
    </conflict>
    <text>Truncated N-terminus.</text>
</comment>
<name>CSPLG_PHYPA</name>
<accession>A9RLK6</accession>
<keyword id="KW-1003">Cell membrane</keyword>
<keyword id="KW-0472">Membrane</keyword>
<keyword id="KW-1185">Reference proteome</keyword>
<keyword id="KW-0812">Transmembrane</keyword>
<keyword id="KW-1133">Transmembrane helix</keyword>
<feature type="chain" id="PRO_0000418674" description="CASP-like protein 5A1">
    <location>
        <begin position="1"/>
        <end position="182"/>
    </location>
</feature>
<feature type="topological domain" description="Cytoplasmic" evidence="2">
    <location>
        <begin position="1"/>
        <end position="47"/>
    </location>
</feature>
<feature type="transmembrane region" description="Helical" evidence="2">
    <location>
        <begin position="48"/>
        <end position="68"/>
    </location>
</feature>
<feature type="topological domain" description="Extracellular" evidence="2">
    <location>
        <begin position="69"/>
        <end position="72"/>
    </location>
</feature>
<feature type="transmembrane region" description="Helical" evidence="2">
    <location>
        <begin position="73"/>
        <end position="93"/>
    </location>
</feature>
<feature type="topological domain" description="Cytoplasmic" evidence="2">
    <location>
        <begin position="94"/>
        <end position="117"/>
    </location>
</feature>
<feature type="transmembrane region" description="Helical" evidence="2">
    <location>
        <begin position="118"/>
        <end position="138"/>
    </location>
</feature>
<feature type="topological domain" description="Extracellular" evidence="2">
    <location>
        <begin position="139"/>
        <end position="158"/>
    </location>
</feature>
<feature type="transmembrane region" description="Helical" evidence="2">
    <location>
        <begin position="159"/>
        <end position="179"/>
    </location>
</feature>
<feature type="topological domain" description="Cytoplasmic" evidence="2">
    <location>
        <begin position="180"/>
        <end position="182"/>
    </location>
</feature>
<reference key="1">
    <citation type="journal article" date="2008" name="Science">
        <title>The Physcomitrella genome reveals evolutionary insights into the conquest of land by plants.</title>
        <authorList>
            <person name="Rensing S.A."/>
            <person name="Lang D."/>
            <person name="Zimmer A.D."/>
            <person name="Terry A."/>
            <person name="Salamov A."/>
            <person name="Shapiro H."/>
            <person name="Nishiyama T."/>
            <person name="Perroud P.-F."/>
            <person name="Lindquist E.A."/>
            <person name="Kamisugi Y."/>
            <person name="Tanahashi T."/>
            <person name="Sakakibara K."/>
            <person name="Fujita T."/>
            <person name="Oishi K."/>
            <person name="Shin-I T."/>
            <person name="Kuroki Y."/>
            <person name="Toyoda A."/>
            <person name="Suzuki Y."/>
            <person name="Hashimoto S.-I."/>
            <person name="Yamaguchi K."/>
            <person name="Sugano S."/>
            <person name="Kohara Y."/>
            <person name="Fujiyama A."/>
            <person name="Anterola A."/>
            <person name="Aoki S."/>
            <person name="Ashton N."/>
            <person name="Barbazuk W.B."/>
            <person name="Barker E."/>
            <person name="Bennetzen J.L."/>
            <person name="Blankenship R."/>
            <person name="Cho S.H."/>
            <person name="Dutcher S.K."/>
            <person name="Estelle M."/>
            <person name="Fawcett J.A."/>
            <person name="Gundlach H."/>
            <person name="Hanada K."/>
            <person name="Heyl A."/>
            <person name="Hicks K.A."/>
            <person name="Hughes J."/>
            <person name="Lohr M."/>
            <person name="Mayer K."/>
            <person name="Melkozernov A."/>
            <person name="Murata T."/>
            <person name="Nelson D.R."/>
            <person name="Pils B."/>
            <person name="Prigge M."/>
            <person name="Reiss B."/>
            <person name="Renner T."/>
            <person name="Rombauts S."/>
            <person name="Rushton P.J."/>
            <person name="Sanderfoot A."/>
            <person name="Schween G."/>
            <person name="Shiu S.-H."/>
            <person name="Stueber K."/>
            <person name="Theodoulou F.L."/>
            <person name="Tu H."/>
            <person name="Van de Peer Y."/>
            <person name="Verrier P.J."/>
            <person name="Waters E."/>
            <person name="Wood A."/>
            <person name="Yang L."/>
            <person name="Cove D."/>
            <person name="Cuming A.C."/>
            <person name="Hasebe M."/>
            <person name="Lucas S."/>
            <person name="Mishler B.D."/>
            <person name="Reski R."/>
            <person name="Grigoriev I.V."/>
            <person name="Quatrano R.S."/>
            <person name="Boore J.L."/>
        </authorList>
    </citation>
    <scope>NUCLEOTIDE SEQUENCE [LARGE SCALE GENOMIC DNA]</scope>
    <source>
        <strain>cv. Gransden 2004</strain>
    </source>
</reference>
<reference key="2">
    <citation type="submission" date="2008-09" db="EMBL/GenBank/DDBJ databases">
        <title>Expressed genes in Physcomitrella patens.</title>
        <authorList>
            <person name="Kohara Y."/>
            <person name="Shin-i T."/>
            <person name="Nishiyama T."/>
            <person name="Suzuki Y."/>
            <person name="Sugano S."/>
            <person name="Hiwatashi Y."/>
            <person name="Hasebe M."/>
        </authorList>
    </citation>
    <scope>NUCLEOTIDE SEQUENCE [LARGE SCALE MRNA]</scope>
    <source>
        <strain>cv. Gransden 2004</strain>
        <tissue>Sporophyte</tissue>
    </source>
</reference>
<reference key="3">
    <citation type="journal article" date="2014" name="Plant Physiol.">
        <title>Functional and evolutionary analysis of the CASPARIAN STRIP MEMBRANE DOMAIN PROTEIN family.</title>
        <authorList>
            <person name="Roppolo D."/>
            <person name="Boeckmann B."/>
            <person name="Pfister A."/>
            <person name="Boutet E."/>
            <person name="Rubio M.C."/>
            <person name="Denervaud-Tendon V."/>
            <person name="Vermeer J.E."/>
            <person name="Gheyselinck J."/>
            <person name="Xenarios I."/>
            <person name="Geldner N."/>
        </authorList>
    </citation>
    <scope>GENE FAMILY</scope>
    <scope>NOMENCLATURE</scope>
</reference>
<proteinExistence type="evidence at transcript level"/>
<evidence type="ECO:0000250" key="1"/>
<evidence type="ECO:0000255" key="2"/>
<evidence type="ECO:0000305" key="3"/>
<organism>
    <name type="scientific">Physcomitrium patens</name>
    <name type="common">Spreading-leaved earth moss</name>
    <name type="synonym">Physcomitrella patens</name>
    <dbReference type="NCBI Taxonomy" id="3218"/>
    <lineage>
        <taxon>Eukaryota</taxon>
        <taxon>Viridiplantae</taxon>
        <taxon>Streptophyta</taxon>
        <taxon>Embryophyta</taxon>
        <taxon>Bryophyta</taxon>
        <taxon>Bryophytina</taxon>
        <taxon>Bryopsida</taxon>
        <taxon>Funariidae</taxon>
        <taxon>Funariales</taxon>
        <taxon>Funariaceae</taxon>
        <taxon>Physcomitrium</taxon>
    </lineage>
</organism>
<gene>
    <name type="ORF">PHYPADRAFT_55654</name>
</gene>